<comment type="subcellular location">
    <subcellularLocation>
        <location evidence="2">Cell membrane</location>
        <topology evidence="2">Multi-pass membrane protein</topology>
    </subcellularLocation>
</comment>
<reference key="1">
    <citation type="journal article" date="2003" name="Proc. Natl. Acad. Sci. U.S.A.">
        <title>The complete genome sequence of Mycobacterium bovis.</title>
        <authorList>
            <person name="Garnier T."/>
            <person name="Eiglmeier K."/>
            <person name="Camus J.-C."/>
            <person name="Medina N."/>
            <person name="Mansoor H."/>
            <person name="Pryor M."/>
            <person name="Duthoy S."/>
            <person name="Grondin S."/>
            <person name="Lacroix C."/>
            <person name="Monsempe C."/>
            <person name="Simon S."/>
            <person name="Harris B."/>
            <person name="Atkin R."/>
            <person name="Doggett J."/>
            <person name="Mayes R."/>
            <person name="Keating L."/>
            <person name="Wheeler P.R."/>
            <person name="Parkhill J."/>
            <person name="Barrell B.G."/>
            <person name="Cole S.T."/>
            <person name="Gordon S.V."/>
            <person name="Hewinson R.G."/>
        </authorList>
    </citation>
    <scope>NUCLEOTIDE SEQUENCE [LARGE SCALE GENOMIC DNA]</scope>
    <source>
        <strain>ATCC BAA-935 / AF2122/97</strain>
    </source>
</reference>
<reference key="2">
    <citation type="journal article" date="2017" name="Genome Announc.">
        <title>Updated reference genome sequence and annotation of Mycobacterium bovis AF2122/97.</title>
        <authorList>
            <person name="Malone K.M."/>
            <person name="Farrell D."/>
            <person name="Stuber T.P."/>
            <person name="Schubert O.T."/>
            <person name="Aebersold R."/>
            <person name="Robbe-Austerman S."/>
            <person name="Gordon S.V."/>
        </authorList>
    </citation>
    <scope>NUCLEOTIDE SEQUENCE [LARGE SCALE GENOMIC DNA]</scope>
    <scope>GENOME REANNOTATION</scope>
    <source>
        <strain>ATCC BAA-935 / AF2122/97</strain>
    </source>
</reference>
<gene>
    <name type="ordered locus">BQ2027_MB0921C</name>
</gene>
<dbReference type="EMBL" id="LT708304">
    <property type="protein sequence ID" value="SIT99519.1"/>
    <property type="molecule type" value="Genomic_DNA"/>
</dbReference>
<dbReference type="RefSeq" id="NP_854578.1">
    <property type="nucleotide sequence ID" value="NC_002945.3"/>
</dbReference>
<dbReference type="RefSeq" id="WP_003900230.1">
    <property type="nucleotide sequence ID" value="NC_002945.4"/>
</dbReference>
<dbReference type="SMR" id="P64752"/>
<dbReference type="KEGG" id="mbo:BQ2027_MB0921C"/>
<dbReference type="PATRIC" id="fig|233413.5.peg.1002"/>
<dbReference type="Proteomes" id="UP000001419">
    <property type="component" value="Chromosome"/>
</dbReference>
<dbReference type="GO" id="GO:0005829">
    <property type="term" value="C:cytosol"/>
    <property type="evidence" value="ECO:0007669"/>
    <property type="project" value="TreeGrafter"/>
</dbReference>
<dbReference type="GO" id="GO:0005886">
    <property type="term" value="C:plasma membrane"/>
    <property type="evidence" value="ECO:0007669"/>
    <property type="project" value="UniProtKB-SubCell"/>
</dbReference>
<dbReference type="Gene3D" id="3.50.50.60">
    <property type="entry name" value="FAD/NAD(P)-binding domain"/>
    <property type="match status" value="1"/>
</dbReference>
<dbReference type="InterPro" id="IPR036188">
    <property type="entry name" value="FAD/NAD-bd_sf"/>
</dbReference>
<dbReference type="PANTHER" id="PTHR10668">
    <property type="entry name" value="PHYTOENE DEHYDROGENASE"/>
    <property type="match status" value="1"/>
</dbReference>
<dbReference type="PANTHER" id="PTHR10668:SF103">
    <property type="entry name" value="PYRIDINE NUCLEOTIDE-DISULFIDE OXIDOREDUCTASE DOMAIN-CONTAINING PROTEIN 2"/>
    <property type="match status" value="1"/>
</dbReference>
<dbReference type="Pfam" id="PF13450">
    <property type="entry name" value="NAD_binding_8"/>
    <property type="match status" value="1"/>
</dbReference>
<dbReference type="SUPFAM" id="SSF51905">
    <property type="entry name" value="FAD/NAD(P)-binding domain"/>
    <property type="match status" value="1"/>
</dbReference>
<protein>
    <recommendedName>
        <fullName>Uncharacterized protein Mb0921c</fullName>
    </recommendedName>
</protein>
<accession>P64752</accession>
<accession>A0A1R3XWS3</accession>
<accession>Q10555</accession>
<accession>X2BGH3</accession>
<proteinExistence type="predicted"/>
<keyword id="KW-1003">Cell membrane</keyword>
<keyword id="KW-0472">Membrane</keyword>
<keyword id="KW-1185">Reference proteome</keyword>
<keyword id="KW-0812">Transmembrane</keyword>
<keyword id="KW-1133">Transmembrane helix</keyword>
<organism>
    <name type="scientific">Mycobacterium bovis (strain ATCC BAA-935 / AF2122/97)</name>
    <dbReference type="NCBI Taxonomy" id="233413"/>
    <lineage>
        <taxon>Bacteria</taxon>
        <taxon>Bacillati</taxon>
        <taxon>Actinomycetota</taxon>
        <taxon>Actinomycetes</taxon>
        <taxon>Mycobacteriales</taxon>
        <taxon>Mycobacteriaceae</taxon>
        <taxon>Mycobacterium</taxon>
        <taxon>Mycobacterium tuberculosis complex</taxon>
    </lineage>
</organism>
<feature type="chain" id="PRO_0000103738" description="Uncharacterized protein Mb0921c">
    <location>
        <begin position="1"/>
        <end position="535"/>
    </location>
</feature>
<feature type="transmembrane region" description="Helical" evidence="1">
    <location>
        <begin position="7"/>
        <end position="27"/>
    </location>
</feature>
<feature type="transmembrane region" description="Helical" evidence="1">
    <location>
        <begin position="509"/>
        <end position="529"/>
    </location>
</feature>
<evidence type="ECO:0000255" key="1"/>
<evidence type="ECO:0000305" key="2"/>
<name>Y921_MYCBO</name>
<sequence>MSDHDRDFDVVVVGGGHNGLVAAAYLARAGLRVRLLERLAQTGGAAVSIQAFDGVEVALSRYSYLVSLLPSRIVADLGAPVRLARRPFSSYTPAPATAGRSGLLIGPTGEPRAAHLAAIGAAPDAHGFAAFYRRCRLVTARLWPTLIEPLRTREQARRDIVEYGGHEAAAAWQAMVDEPIGHAIAGAVANDLLRGVIATDALIGTFARMHEPSLMQNICFLYHLVGGGTGVWHVPIGGMGSVTSALATAAARHGAEIVTGADVFALDPDGTVRYHSDGSDGAEHLVRGRFVLVGVTPAVLASLLGEPVAALAPGAQVKVNMVVRRLPRLRDDSVTPQQAFAGTFHVNETWSQLDAAYSQAASGRLPDPLPCEAYCHSLTDPSILSARLRDAGAQTLTVFGLHTPHSVFGDTEGLAERLTAAVLASLNSVLAEPIQDVLWTDAQSKPCIETTTTLDLQRTLGMTGGNIFHGALSWPFADNDDPLDTPARQWGVATDHERIMLCGSGARRGGAVSGIGGHNAAMAVLACLASRRKSP</sequence>